<evidence type="ECO:0000255" key="1">
    <source>
        <dbReference type="HAMAP-Rule" id="MF_03116"/>
    </source>
</evidence>
<evidence type="ECO:0000256" key="2">
    <source>
        <dbReference type="SAM" id="MobiDB-lite"/>
    </source>
</evidence>
<evidence type="ECO:0000305" key="3"/>
<keyword id="KW-0028">Amino-acid biosynthesis</keyword>
<keyword id="KW-0963">Cytoplasm</keyword>
<keyword id="KW-0456">Lyase</keyword>
<keyword id="KW-0479">Metal-binding</keyword>
<keyword id="KW-0486">Methionine biosynthesis</keyword>
<keyword id="KW-1185">Reference proteome</keyword>
<keyword id="KW-0862">Zinc</keyword>
<reference key="1">
    <citation type="journal article" date="2012" name="MBio">
        <title>Comparative genome analysis of Trichophyton rubrum and related dermatophytes reveals candidate genes involved in infection.</title>
        <authorList>
            <person name="Martinez D.A."/>
            <person name="Oliver B.G."/>
            <person name="Graeser Y."/>
            <person name="Goldberg J.M."/>
            <person name="Li W."/>
            <person name="Martinez-Rossi N.M."/>
            <person name="Monod M."/>
            <person name="Shelest E."/>
            <person name="Barton R.C."/>
            <person name="Birch E."/>
            <person name="Brakhage A.A."/>
            <person name="Chen Z."/>
            <person name="Gurr S.J."/>
            <person name="Heiman D."/>
            <person name="Heitman J."/>
            <person name="Kosti I."/>
            <person name="Rossi A."/>
            <person name="Saif S."/>
            <person name="Samalova M."/>
            <person name="Saunders C.W."/>
            <person name="Shea T."/>
            <person name="Summerbell R.C."/>
            <person name="Xu J."/>
            <person name="Young S."/>
            <person name="Zeng Q."/>
            <person name="Birren B.W."/>
            <person name="Cuomo C.A."/>
            <person name="White T.C."/>
        </authorList>
    </citation>
    <scope>NUCLEOTIDE SEQUENCE [LARGE SCALE GENOMIC DNA]</scope>
    <source>
        <strain>ATCC MYA-4605 / CBS 113480</strain>
    </source>
</reference>
<comment type="function">
    <text evidence="1">Catalyzes the dehydration of methylthioribulose-1-phosphate (MTRu-1-P) into 2,3-diketo-5-methylthiopentyl-1-phosphate (DK-MTP-1-P).</text>
</comment>
<comment type="catalytic activity">
    <reaction evidence="1">
        <text>5-(methylsulfanyl)-D-ribulose 1-phosphate = 5-methylsulfanyl-2,3-dioxopentyl phosphate + H2O</text>
        <dbReference type="Rhea" id="RHEA:15549"/>
        <dbReference type="ChEBI" id="CHEBI:15377"/>
        <dbReference type="ChEBI" id="CHEBI:58548"/>
        <dbReference type="ChEBI" id="CHEBI:58828"/>
        <dbReference type="EC" id="4.2.1.109"/>
    </reaction>
</comment>
<comment type="cofactor">
    <cofactor evidence="1">
        <name>Zn(2+)</name>
        <dbReference type="ChEBI" id="CHEBI:29105"/>
    </cofactor>
    <text evidence="1">Binds 1 zinc ion per subunit.</text>
</comment>
<comment type="pathway">
    <text evidence="1">Amino-acid biosynthesis; L-methionine biosynthesis via salvage pathway; L-methionine from S-methyl-5-thio-alpha-D-ribose 1-phosphate: step 2/6.</text>
</comment>
<comment type="subcellular location">
    <subcellularLocation>
        <location evidence="1">Cytoplasm</location>
    </subcellularLocation>
</comment>
<comment type="similarity">
    <text evidence="1">Belongs to the aldolase class II family. MtnB subfamily.</text>
</comment>
<comment type="sequence caution" evidence="3">
    <conflict type="erroneous gene model prediction">
        <sequence resource="EMBL-CDS" id="EEQ28228"/>
    </conflict>
</comment>
<feature type="chain" id="PRO_0000393830" description="Methylthioribulose-1-phosphate dehydratase">
    <location>
        <begin position="1"/>
        <end position="249"/>
    </location>
</feature>
<feature type="region of interest" description="Disordered" evidence="2">
    <location>
        <begin position="1"/>
        <end position="25"/>
    </location>
</feature>
<feature type="compositionally biased region" description="Polar residues" evidence="2">
    <location>
        <begin position="9"/>
        <end position="18"/>
    </location>
</feature>
<feature type="active site" description="Proton donor/acceptor" evidence="1">
    <location>
        <position position="151"/>
    </location>
</feature>
<feature type="binding site" evidence="1">
    <location>
        <position position="105"/>
    </location>
    <ligand>
        <name>substrate</name>
    </ligand>
</feature>
<feature type="binding site" evidence="1">
    <location>
        <position position="122"/>
    </location>
    <ligand>
        <name>Zn(2+)</name>
        <dbReference type="ChEBI" id="CHEBI:29105"/>
    </ligand>
</feature>
<feature type="binding site" evidence="1">
    <location>
        <position position="124"/>
    </location>
    <ligand>
        <name>Zn(2+)</name>
        <dbReference type="ChEBI" id="CHEBI:29105"/>
    </ligand>
</feature>
<feature type="binding site" evidence="1">
    <location>
        <position position="207"/>
    </location>
    <ligand>
        <name>Zn(2+)</name>
        <dbReference type="ChEBI" id="CHEBI:29105"/>
    </ligand>
</feature>
<organism>
    <name type="scientific">Arthroderma otae (strain ATCC MYA-4605 / CBS 113480)</name>
    <name type="common">Microsporum canis</name>
    <dbReference type="NCBI Taxonomy" id="554155"/>
    <lineage>
        <taxon>Eukaryota</taxon>
        <taxon>Fungi</taxon>
        <taxon>Dikarya</taxon>
        <taxon>Ascomycota</taxon>
        <taxon>Pezizomycotina</taxon>
        <taxon>Eurotiomycetes</taxon>
        <taxon>Eurotiomycetidae</taxon>
        <taxon>Onygenales</taxon>
        <taxon>Arthrodermataceae</taxon>
        <taxon>Microsporum</taxon>
    </lineage>
</organism>
<gene>
    <name evidence="1" type="primary">MDE1</name>
    <name type="ORF">MCYG_01116</name>
</gene>
<sequence length="249" mass="27775">MVDIKPEQTQEGNNNDHLVQSDDPEHPANLIPELCRKFYSLGWVTGTGGGTSIRRGEHIFIAPSGVQKELIKPNEIFVLSYPTPKYPPSARKYIRKPSALNPSACTPLFLAAFDRGAGCCIHTHSQWAVMVTLLVEREKGKSGCFEISNIEQIKGIPRGKGKGMLGFFDTLKIPIIENTAFEEDLTESLEKAMEEYPDTYAVLVRRHGIYVWGDTPAKAKTQCESLDYLFQLAVQMHAHSLPWVVNESA</sequence>
<dbReference type="EC" id="4.2.1.109" evidence="1"/>
<dbReference type="EMBL" id="DS995701">
    <property type="protein sequence ID" value="EEQ28228.1"/>
    <property type="status" value="ALT_SEQ"/>
    <property type="molecule type" value="Genomic_DNA"/>
</dbReference>
<dbReference type="RefSeq" id="XP_002851012.1">
    <property type="nucleotide sequence ID" value="XM_002850966.1"/>
</dbReference>
<dbReference type="SMR" id="C5FEJ4"/>
<dbReference type="STRING" id="554155.C5FEJ4"/>
<dbReference type="GeneID" id="9228473"/>
<dbReference type="eggNOG" id="KOG2631">
    <property type="taxonomic scope" value="Eukaryota"/>
</dbReference>
<dbReference type="HOGENOM" id="CLU_006033_4_0_1"/>
<dbReference type="OrthoDB" id="191080at2759"/>
<dbReference type="UniPathway" id="UPA00904">
    <property type="reaction ID" value="UER00875"/>
</dbReference>
<dbReference type="Proteomes" id="UP000002035">
    <property type="component" value="Unassembled WGS sequence"/>
</dbReference>
<dbReference type="GO" id="GO:0005737">
    <property type="term" value="C:cytoplasm"/>
    <property type="evidence" value="ECO:0007669"/>
    <property type="project" value="UniProtKB-SubCell"/>
</dbReference>
<dbReference type="GO" id="GO:0046570">
    <property type="term" value="F:methylthioribulose 1-phosphate dehydratase activity"/>
    <property type="evidence" value="ECO:0007669"/>
    <property type="project" value="UniProtKB-UniRule"/>
</dbReference>
<dbReference type="GO" id="GO:0008270">
    <property type="term" value="F:zinc ion binding"/>
    <property type="evidence" value="ECO:0007669"/>
    <property type="project" value="UniProtKB-UniRule"/>
</dbReference>
<dbReference type="GO" id="GO:0019509">
    <property type="term" value="P:L-methionine salvage from methylthioadenosine"/>
    <property type="evidence" value="ECO:0007669"/>
    <property type="project" value="UniProtKB-UniRule"/>
</dbReference>
<dbReference type="FunFam" id="3.40.225.10:FF:000003">
    <property type="entry name" value="Methylthioribulose-1-phosphate dehydratase"/>
    <property type="match status" value="1"/>
</dbReference>
<dbReference type="Gene3D" id="3.40.225.10">
    <property type="entry name" value="Class II aldolase/adducin N-terminal domain"/>
    <property type="match status" value="1"/>
</dbReference>
<dbReference type="HAMAP" id="MF_03116">
    <property type="entry name" value="Salvage_MtnB_euk"/>
    <property type="match status" value="1"/>
</dbReference>
<dbReference type="InterPro" id="IPR001303">
    <property type="entry name" value="Aldolase_II/adducin_N"/>
</dbReference>
<dbReference type="InterPro" id="IPR036409">
    <property type="entry name" value="Aldolase_II/adducin_N_sf"/>
</dbReference>
<dbReference type="InterPro" id="IPR017714">
    <property type="entry name" value="MethylthioRu-1-P_deHdtase_MtnB"/>
</dbReference>
<dbReference type="InterPro" id="IPR027514">
    <property type="entry name" value="Salvage_MtnB_euk"/>
</dbReference>
<dbReference type="NCBIfam" id="TIGR03328">
    <property type="entry name" value="salvage_mtnB"/>
    <property type="match status" value="1"/>
</dbReference>
<dbReference type="PANTHER" id="PTHR10640">
    <property type="entry name" value="METHYLTHIORIBULOSE-1-PHOSPHATE DEHYDRATASE"/>
    <property type="match status" value="1"/>
</dbReference>
<dbReference type="PANTHER" id="PTHR10640:SF7">
    <property type="entry name" value="METHYLTHIORIBULOSE-1-PHOSPHATE DEHYDRATASE"/>
    <property type="match status" value="1"/>
</dbReference>
<dbReference type="Pfam" id="PF00596">
    <property type="entry name" value="Aldolase_II"/>
    <property type="match status" value="1"/>
</dbReference>
<dbReference type="SMART" id="SM01007">
    <property type="entry name" value="Aldolase_II"/>
    <property type="match status" value="1"/>
</dbReference>
<dbReference type="SUPFAM" id="SSF53639">
    <property type="entry name" value="AraD/HMP-PK domain-like"/>
    <property type="match status" value="1"/>
</dbReference>
<name>MTNB_ARTOC</name>
<proteinExistence type="inferred from homology"/>
<accession>C5FEJ4</accession>
<protein>
    <recommendedName>
        <fullName evidence="1">Methylthioribulose-1-phosphate dehydratase</fullName>
        <shortName evidence="1">MTRu-1-P dehydratase</shortName>
        <ecNumber evidence="1">4.2.1.109</ecNumber>
    </recommendedName>
</protein>